<feature type="chain" id="PRO_0000041697" description="Zona pellucida sperm-binding protein 2">
    <location>
        <begin position="1" status="less than"/>
        <end position="588"/>
    </location>
</feature>
<feature type="chain" id="PRO_0000304563" description="Processed zona pellucida sperm-binding protein 2">
    <location>
        <begin position="1" status="less than"/>
        <end status="unknown"/>
    </location>
</feature>
<feature type="propeptide" id="PRO_0000041698" description="Removed in mature form" evidence="2">
    <location>
        <begin position="589"/>
        <end position="666"/>
    </location>
</feature>
<feature type="topological domain" description="Extracellular" evidence="4">
    <location>
        <begin position="1" status="less than"/>
        <end position="636"/>
    </location>
</feature>
<feature type="transmembrane region" description="Helical" evidence="4">
    <location>
        <begin position="637"/>
        <end position="656"/>
    </location>
</feature>
<feature type="topological domain" description="Cytoplasmic" evidence="4">
    <location>
        <begin position="657"/>
        <end position="666"/>
    </location>
</feature>
<feature type="domain" description="ZP" evidence="5">
    <location>
        <begin position="319"/>
        <end position="585"/>
    </location>
</feature>
<feature type="region of interest" description="Disordered" evidence="2">
    <location>
        <begin position="417"/>
        <end position="439"/>
    </location>
</feature>
<feature type="site" description="Cleavage; by ASTL" evidence="2">
    <location>
        <begin position="120"/>
        <end position="121"/>
    </location>
</feature>
<feature type="site" description="Cleavage" evidence="2">
    <location>
        <begin position="588"/>
        <end position="589"/>
    </location>
</feature>
<feature type="glycosylation site" description="N-linked (GlcNAc...) asparagine" evidence="1">
    <location>
        <position position="38"/>
    </location>
</feature>
<feature type="glycosylation site" description="N-linked (GlcNAc...) asparagine" evidence="4">
    <location>
        <position position="73"/>
    </location>
</feature>
<feature type="glycosylation site" description="N-linked (GlcNAc...) asparagine" evidence="4">
    <location>
        <position position="126"/>
    </location>
</feature>
<feature type="glycosylation site" description="N-linked (GlcNAc...) asparagine" evidence="1">
    <location>
        <position position="171"/>
    </location>
</feature>
<feature type="glycosylation site" description="N-linked (GlcNAc...) asparagine" evidence="1">
    <location>
        <position position="217"/>
    </location>
</feature>
<feature type="glycosylation site" description="N-linked (GlcNAc...) asparagine" evidence="4">
    <location>
        <position position="241"/>
    </location>
</feature>
<feature type="glycosylation site" description="O-linked (GalNAc...) threonine" evidence="1">
    <location>
        <position position="410"/>
    </location>
</feature>
<feature type="glycosylation site" description="N-linked (GlcNAc...) asparagine" evidence="4">
    <location>
        <position position="613"/>
    </location>
</feature>
<feature type="disulfide bond" evidence="2">
    <location>
        <begin position="6"/>
        <end position="89"/>
    </location>
</feature>
<feature type="disulfide bond" evidence="2">
    <location>
        <begin position="39"/>
        <end position="57"/>
    </location>
</feature>
<feature type="disulfide bond" evidence="2">
    <location>
        <begin position="320"/>
        <end position="413"/>
    </location>
</feature>
<feature type="disulfide bond" evidence="2">
    <location>
        <begin position="351"/>
        <end position="372"/>
    </location>
</feature>
<feature type="disulfide bond" evidence="2">
    <location>
        <begin position="493"/>
        <end position="563"/>
    </location>
</feature>
<feature type="disulfide bond" evidence="2">
    <location>
        <begin position="514"/>
        <end position="582"/>
    </location>
</feature>
<feature type="disulfide bond" evidence="2">
    <location>
        <begin position="568"/>
        <end position="578"/>
    </location>
</feature>
<feature type="non-terminal residue">
    <location>
        <position position="1"/>
    </location>
</feature>
<dbReference type="EMBL" id="L12167">
    <property type="protein sequence ID" value="AAA31502.1"/>
    <property type="molecule type" value="mRNA"/>
</dbReference>
<dbReference type="SMR" id="P48829"/>
<dbReference type="FunCoup" id="P48829">
    <property type="interactions" value="18"/>
</dbReference>
<dbReference type="STRING" id="9986.ENSOCUP00000011114"/>
<dbReference type="GlyCosmos" id="P48829">
    <property type="glycosylation" value="8 sites, No reported glycans"/>
</dbReference>
<dbReference type="PaxDb" id="9986-ENSOCUP00000011114"/>
<dbReference type="eggNOG" id="ENOG502QPI2">
    <property type="taxonomic scope" value="Eukaryota"/>
</dbReference>
<dbReference type="InParanoid" id="P48829"/>
<dbReference type="Proteomes" id="UP000001811">
    <property type="component" value="Unplaced"/>
</dbReference>
<dbReference type="GO" id="GO:0062023">
    <property type="term" value="C:collagen-containing extracellular matrix"/>
    <property type="evidence" value="ECO:0000250"/>
    <property type="project" value="UniProtKB"/>
</dbReference>
<dbReference type="GO" id="GO:0035805">
    <property type="term" value="C:egg coat"/>
    <property type="evidence" value="ECO:0000250"/>
    <property type="project" value="UniProtKB"/>
</dbReference>
<dbReference type="GO" id="GO:0005783">
    <property type="term" value="C:endoplasmic reticulum"/>
    <property type="evidence" value="ECO:0000250"/>
    <property type="project" value="UniProtKB"/>
</dbReference>
<dbReference type="GO" id="GO:0005576">
    <property type="term" value="C:extracellular region"/>
    <property type="evidence" value="ECO:0007669"/>
    <property type="project" value="UniProtKB-KW"/>
</dbReference>
<dbReference type="GO" id="GO:0005771">
    <property type="term" value="C:multivesicular body"/>
    <property type="evidence" value="ECO:0000250"/>
    <property type="project" value="UniProtKB"/>
</dbReference>
<dbReference type="GO" id="GO:0005886">
    <property type="term" value="C:plasma membrane"/>
    <property type="evidence" value="ECO:0000250"/>
    <property type="project" value="UniProtKB"/>
</dbReference>
<dbReference type="GO" id="GO:0032190">
    <property type="term" value="F:acrosin binding"/>
    <property type="evidence" value="ECO:0007669"/>
    <property type="project" value="TreeGrafter"/>
</dbReference>
<dbReference type="GO" id="GO:0035804">
    <property type="term" value="F:structural constituent of egg coat"/>
    <property type="evidence" value="ECO:0000314"/>
    <property type="project" value="UniProtKB"/>
</dbReference>
<dbReference type="GO" id="GO:0007339">
    <property type="term" value="P:binding of sperm to zona pellucida"/>
    <property type="evidence" value="ECO:0000250"/>
    <property type="project" value="UniProtKB"/>
</dbReference>
<dbReference type="GO" id="GO:0060468">
    <property type="term" value="P:prevention of polyspermy"/>
    <property type="evidence" value="ECO:0000250"/>
    <property type="project" value="UniProtKB"/>
</dbReference>
<dbReference type="FunFam" id="2.60.40.3210:FF:000006">
    <property type="entry name" value="Zona pellucida sperm-binding protein 2"/>
    <property type="match status" value="1"/>
</dbReference>
<dbReference type="FunFam" id="2.60.40.4100:FF:000004">
    <property type="entry name" value="Zona pellucida sperm-binding protein 2"/>
    <property type="match status" value="1"/>
</dbReference>
<dbReference type="Gene3D" id="2.60.40.4100">
    <property type="entry name" value="Zona pellucida, ZP-C domain"/>
    <property type="match status" value="1"/>
</dbReference>
<dbReference type="Gene3D" id="2.60.40.3210">
    <property type="entry name" value="Zona pellucida, ZP-N domain"/>
    <property type="match status" value="1"/>
</dbReference>
<dbReference type="InterPro" id="IPR051148">
    <property type="entry name" value="Zona_Pellucida_Domain_gp"/>
</dbReference>
<dbReference type="InterPro" id="IPR055355">
    <property type="entry name" value="ZP-C"/>
</dbReference>
<dbReference type="InterPro" id="IPR042235">
    <property type="entry name" value="ZP-C_dom"/>
</dbReference>
<dbReference type="InterPro" id="IPR055356">
    <property type="entry name" value="ZP-N"/>
</dbReference>
<dbReference type="InterPro" id="IPR048290">
    <property type="entry name" value="ZP_chr"/>
</dbReference>
<dbReference type="InterPro" id="IPR001507">
    <property type="entry name" value="ZP_dom"/>
</dbReference>
<dbReference type="InterPro" id="IPR017977">
    <property type="entry name" value="ZP_dom_CS"/>
</dbReference>
<dbReference type="PANTHER" id="PTHR23343">
    <property type="entry name" value="ZONA PELLUCIDA SPERM-BINDING PROTEIN"/>
    <property type="match status" value="1"/>
</dbReference>
<dbReference type="PANTHER" id="PTHR23343:SF4">
    <property type="entry name" value="ZONA PELLUCIDA SPERM-BINDING PROTEIN 2"/>
    <property type="match status" value="1"/>
</dbReference>
<dbReference type="Pfam" id="PF23736">
    <property type="entry name" value="Ig_ZP2"/>
    <property type="match status" value="1"/>
</dbReference>
<dbReference type="Pfam" id="PF23740">
    <property type="entry name" value="Ig_ZP2_3rd"/>
    <property type="match status" value="1"/>
</dbReference>
<dbReference type="Pfam" id="PF23738">
    <property type="entry name" value="Ig_ZP2_N"/>
    <property type="match status" value="1"/>
</dbReference>
<dbReference type="Pfam" id="PF00100">
    <property type="entry name" value="Zona_pellucida"/>
    <property type="match status" value="1"/>
</dbReference>
<dbReference type="Pfam" id="PF23344">
    <property type="entry name" value="ZP-N"/>
    <property type="match status" value="1"/>
</dbReference>
<dbReference type="PRINTS" id="PR00023">
    <property type="entry name" value="ZPELLUCIDA"/>
</dbReference>
<dbReference type="SMART" id="SM00241">
    <property type="entry name" value="ZP"/>
    <property type="match status" value="1"/>
</dbReference>
<dbReference type="PROSITE" id="PS00682">
    <property type="entry name" value="ZP_1"/>
    <property type="match status" value="1"/>
</dbReference>
<dbReference type="PROSITE" id="PS51034">
    <property type="entry name" value="ZP_2"/>
    <property type="match status" value="1"/>
</dbReference>
<organism>
    <name type="scientific">Oryctolagus cuniculus</name>
    <name type="common">Rabbit</name>
    <dbReference type="NCBI Taxonomy" id="9986"/>
    <lineage>
        <taxon>Eukaryota</taxon>
        <taxon>Metazoa</taxon>
        <taxon>Chordata</taxon>
        <taxon>Craniata</taxon>
        <taxon>Vertebrata</taxon>
        <taxon>Euteleostomi</taxon>
        <taxon>Mammalia</taxon>
        <taxon>Eutheria</taxon>
        <taxon>Euarchontoglires</taxon>
        <taxon>Glires</taxon>
        <taxon>Lagomorpha</taxon>
        <taxon>Leporidae</taxon>
        <taxon>Oryctolagus</taxon>
    </lineage>
</organism>
<reference key="1">
    <citation type="journal article" date="1993" name="J. Biol. Chem.">
        <title>Identification and structural characterization of the 75-kDa rabbit zona pellucida protein.</title>
        <authorList>
            <person name="Lee V.H."/>
            <person name="Schwoebel E.D."/>
            <person name="Prasad S.V."/>
            <person name="Cheung P."/>
            <person name="Timmons T.M."/>
            <person name="Cook R.G."/>
            <person name="Dunbar B.S."/>
        </authorList>
    </citation>
    <scope>NUCLEOTIDE SEQUENCE [MRNA]</scope>
    <source>
        <strain>New Zealand white</strain>
        <tissue>Ovary</tissue>
    </source>
</reference>
<reference key="2">
    <citation type="journal article" date="2012" name="J. Proteomics">
        <title>Rabbit zona pellucida composition: a molecular, proteomic and phylogenetic approach.</title>
        <authorList>
            <person name="Stetson I."/>
            <person name="Izquierdo-Rico M.J."/>
            <person name="Moros C."/>
            <person name="Chevret P."/>
            <person name="Lorenzo P.L."/>
            <person name="Ballesta J."/>
            <person name="Rebollar P.G."/>
            <person name="Gutierrez-Gallego R."/>
            <person name="Aviles M."/>
        </authorList>
    </citation>
    <scope>IDENTIFICATION BY MASS SPECTROMETRY</scope>
    <scope>TISSUE SPECIFICITY</scope>
    <scope>SUBCELLULAR LOCATION</scope>
    <source>
        <tissue>Ovary</tissue>
    </source>
</reference>
<keyword id="KW-1003">Cell membrane</keyword>
<keyword id="KW-0165">Cleavage on pair of basic residues</keyword>
<keyword id="KW-1015">Disulfide bond</keyword>
<keyword id="KW-0272">Extracellular matrix</keyword>
<keyword id="KW-0278">Fertilization</keyword>
<keyword id="KW-0325">Glycoprotein</keyword>
<keyword id="KW-0472">Membrane</keyword>
<keyword id="KW-0675">Receptor</keyword>
<keyword id="KW-1185">Reference proteome</keyword>
<keyword id="KW-0964">Secreted</keyword>
<keyword id="KW-0812">Transmembrane</keyword>
<keyword id="KW-1133">Transmembrane helix</keyword>
<name>ZP2_RABIT</name>
<protein>
    <recommendedName>
        <fullName>Zona pellucida sperm-binding protein 2</fullName>
    </recommendedName>
    <alternativeName>
        <fullName>75 kDa zona pellucida protein</fullName>
    </alternativeName>
    <alternativeName>
        <fullName>Zona pellucida glycoprotein 2</fullName>
        <shortName>Zp-2</shortName>
    </alternativeName>
    <alternativeName>
        <fullName>Zona pellucida protein A</fullName>
    </alternativeName>
    <component>
        <recommendedName>
            <fullName>Processed zona pellucida sperm-binding protein 2</fullName>
        </recommendedName>
    </component>
</protein>
<accession>P48829</accession>
<proteinExistence type="evidence at protein level"/>
<sequence length="666" mass="73644">PGTVTCNENEIIVEFPSYVGTKTLHASVVDPLGVEMLNCTYILDPEKLTLRVPYKACTRAVHGGYQMSIRVMNNSAALRHTDVEYQFFCPVEQTLEFSKSAACTKDFMSLSFPHIPTGLGDSTMVNESQMGWMVQAGHGPGAQTLSLEEAKGQGFGVLIDDNKMTLSVLLNATGVTHYVEGTSHLHTMFLKLSLVSPGQKMPFPSRAICLSGPVTCNATHMTLTIPEFPGKLESVSIENRNITVSQLHDQGIDVEAINGLRLHFSKTVLKTKFSEKCLHDQLYISSLKLTFNLELDTVSTVINPECPCDSPASIVSGELCTQDGFMDFEVYTHQTKPALNLDTLRVGSSSCQPVFKAQSQGLVRFRIPLNGCGTRHKFEDEKVIYENEVHALWENLPPSKISRDSEFRMTVQCYYTRDDMLLNANIKSLPPPVASVKPGPLALSLQTYPDESYQQPYRVNEYPIVKYLRQPIYMEVRVLNRNDPNIKLALDDCWATSSMDPASLPKWSIVMDGCEYSLDNYQTNFHPVGSSVTHPEHYQRFDVKTFAFVSEAQARSSLVYFHCSALICNQHYPDSPLCSVTCPGSSRHRRATGNTEEERVTASLPGPILLLPNGSSFRGVGDSKEHGMAGDVTSKTMAAVAAVAGVVATLGFISYLCKKRTMMLSH</sequence>
<evidence type="ECO:0000250" key="1"/>
<evidence type="ECO:0000250" key="2">
    <source>
        <dbReference type="UniProtKB" id="P20239"/>
    </source>
</evidence>
<evidence type="ECO:0000250" key="3">
    <source>
        <dbReference type="UniProtKB" id="Q05996"/>
    </source>
</evidence>
<evidence type="ECO:0000255" key="4"/>
<evidence type="ECO:0000255" key="5">
    <source>
        <dbReference type="PROSITE-ProRule" id="PRU00375"/>
    </source>
</evidence>
<evidence type="ECO:0000269" key="6">
    <source>
    </source>
</evidence>
<evidence type="ECO:0000305" key="7"/>
<gene>
    <name type="primary">ZP2</name>
    <name type="synonym">ZPA</name>
</gene>
<comment type="function">
    <text evidence="2">Component of the zona pellucida, an extracellular matrix surrounding oocytes which mediates sperm binding, induction of the acrosome reaction and prevents post-fertilization polyspermy. The zona pellucida is composed of 3 to 4 glycoproteins, ZP1, ZP2, ZP3, and ZP4. ZP2 may act as a secondary sperm receptor.</text>
</comment>
<comment type="subunit">
    <text evidence="2 3">Can form homopolymers that assemble into long fibers (in vitro). Polymers of ZP2 and ZP3 organized into long filaments cross-linked by ZP1 homodimers. Interacts with ZP3.</text>
</comment>
<comment type="subcellular location">
    <molecule>Processed zona pellucida sperm-binding protein 2</molecule>
    <subcellularLocation>
        <location evidence="2">Zona pellucida</location>
    </subcellularLocation>
</comment>
<comment type="subcellular location">
    <subcellularLocation>
        <location evidence="2">Cell membrane</location>
        <topology evidence="4">Single-pass type I membrane protein</topology>
    </subcellularLocation>
</comment>
<comment type="tissue specificity">
    <text evidence="6">Oocytes (at protein level).</text>
</comment>
<comment type="domain">
    <text evidence="2">The ZP domain is involved in the polymerization of the ZP proteins to form the zona pellucida.</text>
</comment>
<comment type="PTM">
    <text evidence="2">Proteolytically cleaved before the transmembrane segment to yield the secreted ectodomain incorporated in the zona pellucida.</text>
</comment>
<comment type="PTM">
    <text evidence="2">Proteolytically cleaved in the N-terminal part by the metalloendopeptidase ASTL exocytosed from cortical granules after fertilization, yielding a N-terminal peptide of about 30 kDa which remains covalently attached to the C-terminal peptide via disulfide bond(s). This cleavage may play an important role in the post-fertilization block to polyspermy. Additional proteolytically cleavage of the N-terminal peptide of 30 kDa occurs in one-cell and two-cell embryos.</text>
</comment>
<comment type="PTM">
    <text evidence="2">N-glycosylated.</text>
</comment>
<comment type="PTM">
    <text evidence="2">O-glycosylated; contains sulfate-substituted glycans.</text>
</comment>
<comment type="similarity">
    <text evidence="7">Belongs to the ZP domain family. ZPA subfamily.</text>
</comment>